<proteinExistence type="evidence at protein level"/>
<feature type="chain" id="PRO_0000259508" description="Teneurin-4">
    <location>
        <begin position="1"/>
        <end position="2769"/>
    </location>
</feature>
<feature type="topological domain" description="Cytoplasmic" evidence="3">
    <location>
        <begin position="1"/>
        <end position="345"/>
    </location>
</feature>
<feature type="transmembrane region" description="Helical" evidence="3">
    <location>
        <begin position="346"/>
        <end position="366"/>
    </location>
</feature>
<feature type="topological domain" description="Extracellular" evidence="3">
    <location>
        <begin position="367"/>
        <end position="2769"/>
    </location>
</feature>
<feature type="domain" description="Teneurin N-terminal" evidence="5">
    <location>
        <begin position="1"/>
        <end position="341"/>
    </location>
</feature>
<feature type="domain" description="EGF-like 1" evidence="4">
    <location>
        <begin position="562"/>
        <end position="593"/>
    </location>
</feature>
<feature type="domain" description="EGF-like 2" evidence="4">
    <location>
        <begin position="594"/>
        <end position="624"/>
    </location>
</feature>
<feature type="domain" description="EGF-like 3" evidence="4">
    <location>
        <begin position="626"/>
        <end position="658"/>
    </location>
</feature>
<feature type="domain" description="EGF-like 4" evidence="4">
    <location>
        <begin position="659"/>
        <end position="690"/>
    </location>
</feature>
<feature type="domain" description="EGF-like 5" evidence="4">
    <location>
        <begin position="692"/>
        <end position="725"/>
    </location>
</feature>
<feature type="domain" description="EGF-like 6" evidence="4">
    <location>
        <begin position="726"/>
        <end position="757"/>
    </location>
</feature>
<feature type="domain" description="EGF-like 7" evidence="4">
    <location>
        <begin position="758"/>
        <end position="787"/>
    </location>
</feature>
<feature type="domain" description="EGF-like 8" evidence="4">
    <location>
        <begin position="788"/>
        <end position="831"/>
    </location>
</feature>
<feature type="repeat" description="NHL 1">
    <location>
        <begin position="1216"/>
        <end position="1259"/>
    </location>
</feature>
<feature type="repeat" description="NHL 2">
    <location>
        <begin position="1264"/>
        <end position="1308"/>
    </location>
</feature>
<feature type="repeat" description="NHL 3">
    <location>
        <begin position="1334"/>
        <end position="1378"/>
    </location>
</feature>
<feature type="repeat" description="NHL 4">
    <location>
        <begin position="1393"/>
        <end position="1444"/>
    </location>
</feature>
<feature type="repeat" description="NHL 5">
    <location>
        <begin position="1523"/>
        <end position="1566"/>
    </location>
</feature>
<feature type="repeat" description="YD 1">
    <location>
        <begin position="1576"/>
        <end position="1595"/>
    </location>
</feature>
<feature type="repeat" description="YD 2">
    <location>
        <begin position="1612"/>
        <end position="1632"/>
    </location>
</feature>
<feature type="repeat" description="YD 3">
    <location>
        <begin position="1675"/>
        <end position="1694"/>
    </location>
</feature>
<feature type="repeat" description="YD 4">
    <location>
        <begin position="1695"/>
        <end position="1717"/>
    </location>
</feature>
<feature type="repeat" description="YD 5">
    <location>
        <begin position="1887"/>
        <end position="1906"/>
    </location>
</feature>
<feature type="repeat" description="YD 6">
    <location>
        <begin position="1928"/>
        <end position="1946"/>
    </location>
</feature>
<feature type="repeat" description="YD 7">
    <location>
        <begin position="1947"/>
        <end position="1967"/>
    </location>
</feature>
<feature type="repeat" description="YD 8">
    <location>
        <begin position="1974"/>
        <end position="1991"/>
    </location>
</feature>
<feature type="repeat" description="YD 9">
    <location>
        <begin position="1992"/>
        <end position="2013"/>
    </location>
</feature>
<feature type="repeat" description="YD 10">
    <location>
        <begin position="2014"/>
        <end position="2031"/>
    </location>
</feature>
<feature type="repeat" description="YD 11">
    <location>
        <begin position="2034"/>
        <end position="2054"/>
    </location>
</feature>
<feature type="repeat" description="YD 12">
    <location>
        <begin position="2057"/>
        <end position="2077"/>
    </location>
</feature>
<feature type="repeat" description="YD 13">
    <location>
        <begin position="2085"/>
        <end position="2104"/>
    </location>
</feature>
<feature type="repeat" description="YD 14">
    <location>
        <begin position="2110"/>
        <end position="2127"/>
    </location>
</feature>
<feature type="repeat" description="YD 15">
    <location>
        <begin position="2128"/>
        <end position="2154"/>
    </location>
</feature>
<feature type="repeat" description="YD 16">
    <location>
        <begin position="2156"/>
        <end position="2169"/>
    </location>
</feature>
<feature type="repeat" description="YD 17">
    <location>
        <begin position="2170"/>
        <end position="2193"/>
    </location>
</feature>
<feature type="repeat" description="YD 18">
    <location>
        <begin position="2196"/>
        <end position="2216"/>
    </location>
</feature>
<feature type="repeat" description="YD 19">
    <location>
        <begin position="2217"/>
        <end position="2237"/>
    </location>
</feature>
<feature type="repeat" description="YD 20">
    <location>
        <begin position="2239"/>
        <end position="2259"/>
    </location>
</feature>
<feature type="repeat" description="YD 21">
    <location>
        <begin position="2271"/>
        <end position="2291"/>
    </location>
</feature>
<feature type="repeat" description="YD 22">
    <location>
        <begin position="2293"/>
        <end position="2313"/>
    </location>
</feature>
<feature type="repeat" description="YD 23">
    <location>
        <begin position="2339"/>
        <end position="2380"/>
    </location>
</feature>
<feature type="region of interest" description="Disordered" evidence="6">
    <location>
        <begin position="1"/>
        <end position="45"/>
    </location>
</feature>
<feature type="region of interest" description="Disordered" evidence="6">
    <location>
        <begin position="130"/>
        <end position="233"/>
    </location>
</feature>
<feature type="region of interest" description="Disordered" evidence="6">
    <location>
        <begin position="400"/>
        <end position="426"/>
    </location>
</feature>
<feature type="region of interest" description="Disordered" evidence="6">
    <location>
        <begin position="507"/>
        <end position="526"/>
    </location>
</feature>
<feature type="compositionally biased region" description="Basic and acidic residues" evidence="6">
    <location>
        <begin position="1"/>
        <end position="22"/>
    </location>
</feature>
<feature type="compositionally biased region" description="Low complexity" evidence="6">
    <location>
        <begin position="134"/>
        <end position="155"/>
    </location>
</feature>
<feature type="compositionally biased region" description="Basic and acidic residues" evidence="6">
    <location>
        <begin position="156"/>
        <end position="166"/>
    </location>
</feature>
<feature type="compositionally biased region" description="Polar residues" evidence="6">
    <location>
        <begin position="187"/>
        <end position="211"/>
    </location>
</feature>
<feature type="compositionally biased region" description="Basic and acidic residues" evidence="6">
    <location>
        <begin position="408"/>
        <end position="417"/>
    </location>
</feature>
<feature type="compositionally biased region" description="Polar residues" evidence="6">
    <location>
        <begin position="514"/>
        <end position="526"/>
    </location>
</feature>
<feature type="modified residue" description="Phosphoserine" evidence="2">
    <location>
        <position position="124"/>
    </location>
</feature>
<feature type="modified residue" description="Phosphothreonine" evidence="2">
    <location>
        <position position="178"/>
    </location>
</feature>
<feature type="glycosylation site" description="N-linked (GlcNAc...) asparagine" evidence="3">
    <location>
        <position position="467"/>
    </location>
</feature>
<feature type="glycosylation site" description="N-linked (GlcNAc...) asparagine" evidence="3">
    <location>
        <position position="940"/>
    </location>
</feature>
<feature type="glycosylation site" description="N-linked (GlcNAc...) asparagine" evidence="3">
    <location>
        <position position="1259"/>
    </location>
</feature>
<feature type="glycosylation site" description="N-linked (GlcNAc...) asparagine" evidence="3">
    <location>
        <position position="1609"/>
    </location>
</feature>
<feature type="glycosylation site" description="N-linked (GlcNAc...) asparagine" evidence="3">
    <location>
        <position position="1705"/>
    </location>
</feature>
<feature type="glycosylation site" description="N-linked (GlcNAc...) asparagine" evidence="3">
    <location>
        <position position="1741"/>
    </location>
</feature>
<feature type="glycosylation site" description="N-linked (GlcNAc...) asparagine" evidence="3">
    <location>
        <position position="1799"/>
    </location>
</feature>
<feature type="glycosylation site" description="N-linked (GlcNAc...) asparagine" evidence="3">
    <location>
        <position position="1884"/>
    </location>
</feature>
<feature type="glycosylation site" description="N-linked (GlcNAc...) asparagine" evidence="3">
    <location>
        <position position="1985"/>
    </location>
</feature>
<feature type="glycosylation site" description="N-linked (GlcNAc...) asparagine" evidence="3">
    <location>
        <position position="2188"/>
    </location>
</feature>
<feature type="glycosylation site" description="N-linked (GlcNAc...) asparagine" evidence="3">
    <location>
        <position position="2328"/>
    </location>
</feature>
<feature type="glycosylation site" description="N-linked (GlcNAc...) asparagine" evidence="3">
    <location>
        <position position="2646"/>
    </location>
</feature>
<feature type="disulfide bond" evidence="4">
    <location>
        <begin position="566"/>
        <end position="576"/>
    </location>
</feature>
<feature type="disulfide bond" evidence="4">
    <location>
        <begin position="570"/>
        <end position="581"/>
    </location>
</feature>
<feature type="disulfide bond" evidence="4">
    <location>
        <begin position="583"/>
        <end position="592"/>
    </location>
</feature>
<feature type="disulfide bond" evidence="4">
    <location>
        <begin position="601"/>
        <end position="612"/>
    </location>
</feature>
<feature type="disulfide bond" evidence="4">
    <location>
        <begin position="614"/>
        <end position="623"/>
    </location>
</feature>
<feature type="disulfide bond" evidence="4">
    <location>
        <begin position="630"/>
        <end position="641"/>
    </location>
</feature>
<feature type="disulfide bond" evidence="4">
    <location>
        <begin position="635"/>
        <end position="646"/>
    </location>
</feature>
<feature type="disulfide bond" evidence="4">
    <location>
        <begin position="648"/>
        <end position="657"/>
    </location>
</feature>
<feature type="disulfide bond" evidence="4">
    <location>
        <begin position="662"/>
        <end position="673"/>
    </location>
</feature>
<feature type="disulfide bond" evidence="4">
    <location>
        <begin position="667"/>
        <end position="678"/>
    </location>
</feature>
<feature type="disulfide bond" evidence="4">
    <location>
        <begin position="680"/>
        <end position="689"/>
    </location>
</feature>
<feature type="disulfide bond" evidence="4">
    <location>
        <begin position="700"/>
        <end position="713"/>
    </location>
</feature>
<feature type="disulfide bond" evidence="4">
    <location>
        <begin position="715"/>
        <end position="724"/>
    </location>
</feature>
<feature type="disulfide bond" evidence="4">
    <location>
        <begin position="729"/>
        <end position="739"/>
    </location>
</feature>
<feature type="disulfide bond" evidence="4">
    <location>
        <begin position="733"/>
        <end position="744"/>
    </location>
</feature>
<feature type="disulfide bond" evidence="4">
    <location>
        <begin position="746"/>
        <end position="755"/>
    </location>
</feature>
<feature type="disulfide bond" evidence="4">
    <location>
        <begin position="760"/>
        <end position="770"/>
    </location>
</feature>
<feature type="disulfide bond" evidence="4">
    <location>
        <begin position="764"/>
        <end position="775"/>
    </location>
</feature>
<feature type="disulfide bond" evidence="4">
    <location>
        <begin position="777"/>
        <end position="786"/>
    </location>
</feature>
<feature type="disulfide bond" evidence="4">
    <location>
        <begin position="800"/>
        <end position="810"/>
    </location>
</feature>
<feature type="disulfide bond" evidence="4">
    <location>
        <begin position="804"/>
        <end position="819"/>
    </location>
</feature>
<feature type="disulfide bond" evidence="4">
    <location>
        <begin position="821"/>
        <end position="830"/>
    </location>
</feature>
<feature type="sequence variant" id="VAR_062167" description="In dbSNP:rs58537389.">
    <original>R</original>
    <variation>Q</variation>
    <location>
        <position position="14"/>
    </location>
</feature>
<feature type="sequence variant" id="VAR_076654" description="In ETM5; uncertain significance; dbSNP:rs760852624." evidence="7">
    <original>R</original>
    <variation>P</variation>
    <location>
        <position position="53"/>
    </location>
</feature>
<feature type="sequence variant" id="VAR_060130" description="In dbSNP:rs3812723.">
    <original>V</original>
    <variation>I</variation>
    <location>
        <position position="396"/>
    </location>
</feature>
<feature type="sequence variant" id="VAR_076655" description="In ETM5; uncertain significance." evidence="7">
    <original>A</original>
    <variation>D</variation>
    <location>
        <position position="474"/>
    </location>
</feature>
<feature type="sequence variant" id="VAR_060131" description="In dbSNP:rs17137261.">
    <original>E</original>
    <variation>Q</variation>
    <location>
        <position position="506"/>
    </location>
</feature>
<feature type="sequence variant" id="VAR_076656" description="In ETM5; uncertain significance; dbSNP:rs201191369." evidence="7">
    <original>R</original>
    <variation>Q</variation>
    <location>
        <position position="518"/>
    </location>
</feature>
<feature type="sequence variant" id="VAR_085138" description="Found in a patiend with developmental delay, cleft palate and proliferative retinopathy; uncertain significance; dbSNP:rs1591072819." evidence="8">
    <original>G</original>
    <variation>E</variation>
    <location>
        <position position="519"/>
    </location>
</feature>
<feature type="sequence variant" id="VAR_076657" description="In ETM5; uncertain significance; dbSNP:rs556858741." evidence="7">
    <original>V</original>
    <variation>M</variation>
    <location>
        <position position="1128"/>
    </location>
</feature>
<feature type="sequence variant" id="VAR_076521" description="In ETM5; dominant negative effect on central nervous myelination and axon guidance; changed localization to the plasma membrane; clustered plasma membrane localization; dbSNP:rs538881762." evidence="7">
    <original>V</original>
    <variation>M</variation>
    <location>
        <position position="1138"/>
    </location>
</feature>
<feature type="sequence variant" id="VAR_076522" description="In ETM5; dominant negative effect on central nervous myelination and axon guidance; changed localization to the plasma membrane; clustered plasma membrane localization; dbSNP:rs763485258." evidence="7">
    <original>T</original>
    <variation>N</variation>
    <location>
        <position position="1367"/>
    </location>
</feature>
<feature type="sequence variant" id="VAR_076523" description="In ETM5; dominant negative effect on central nervous myelination and axon guidance; changed localization to the plasma membrane; clustered plasma membrane localization; dbSNP:rs375681722." evidence="7">
    <original>A</original>
    <variation>T</variation>
    <location>
        <position position="1442"/>
    </location>
</feature>
<feature type="sequence variant" id="VAR_076658" description="In ETM5; uncertain significance; dbSNP:rs770111861." evidence="7">
    <original>K</original>
    <variation>Q</variation>
    <location>
        <position position="1535"/>
    </location>
</feature>
<feature type="sequence variant" id="VAR_076659" description="In ETM5; uncertain significance; dbSNP:rs199687168." evidence="7">
    <original>R</original>
    <variation>H</variation>
    <location>
        <position position="1632"/>
    </location>
</feature>
<feature type="sequence variant" id="VAR_076660" description="In ETM5; uncertain significance; dbSNP:rs201995608." evidence="7">
    <original>G</original>
    <variation>R</variation>
    <location>
        <position position="1763"/>
    </location>
</feature>
<feature type="sequence variant" id="VAR_076661" description="In ETM5; uncertain significance; dbSNP:rs201769315." evidence="7">
    <original>M</original>
    <variation>I</variation>
    <location>
        <position position="2451"/>
    </location>
</feature>
<feature type="sequence conflict" description="In Ref. 4; CAE45850." evidence="9" ref="4">
    <original>T</original>
    <variation>I</variation>
    <location>
        <position position="1471"/>
    </location>
</feature>
<feature type="sequence conflict" description="In Ref. 4; CAD97943." evidence="9" ref="4">
    <original>D</original>
    <variation>G</variation>
    <location>
        <position position="1842"/>
    </location>
</feature>
<feature type="sequence conflict" description="In Ref. 4; CAD97943." evidence="9" ref="4">
    <original>L</original>
    <variation>F</variation>
    <location>
        <position position="2024"/>
    </location>
</feature>
<feature type="sequence conflict" description="In Ref. 4; CAE45850." evidence="9" ref="4">
    <original>N</original>
    <variation>D</variation>
    <location>
        <position position="2393"/>
    </location>
</feature>
<feature type="sequence conflict" description="In Ref. 5; BAB71206." evidence="9" ref="5">
    <original>Q</original>
    <variation>L</variation>
    <location>
        <position position="2551"/>
    </location>
</feature>
<feature type="sequence conflict" description="In Ref. 4; CAB45719." evidence="9" ref="4">
    <original>V</original>
    <variation>G</variation>
    <location>
        <position position="2586"/>
    </location>
</feature>
<feature type="sequence conflict" description="In Ref. 4; CAB45719." evidence="9" ref="4">
    <original>N</original>
    <variation>D</variation>
    <location>
        <position position="2599"/>
    </location>
</feature>
<feature type="sequence conflict" description="In Ref. 5; BAB71206." evidence="9" ref="5">
    <original>N</original>
    <variation>S</variation>
    <location>
        <position position="2657"/>
    </location>
</feature>
<feature type="strand" evidence="11">
    <location>
        <begin position="839"/>
        <end position="842"/>
    </location>
</feature>
<feature type="strand" evidence="11">
    <location>
        <begin position="846"/>
        <end position="848"/>
    </location>
</feature>
<feature type="helix" evidence="11">
    <location>
        <begin position="851"/>
        <end position="853"/>
    </location>
</feature>
<feature type="helix" evidence="11">
    <location>
        <begin position="855"/>
        <end position="859"/>
    </location>
</feature>
<feature type="turn" evidence="11">
    <location>
        <begin position="861"/>
        <end position="865"/>
    </location>
</feature>
<feature type="helix" evidence="11">
    <location>
        <begin position="867"/>
        <end position="870"/>
    </location>
</feature>
<feature type="helix" evidence="10">
    <location>
        <begin position="875"/>
        <end position="880"/>
    </location>
</feature>
<feature type="helix" evidence="10">
    <location>
        <begin position="895"/>
        <end position="899"/>
    </location>
</feature>
<feature type="strand" evidence="10">
    <location>
        <begin position="906"/>
        <end position="909"/>
    </location>
</feature>
<feature type="strand" evidence="10">
    <location>
        <begin position="911"/>
        <end position="913"/>
    </location>
</feature>
<feature type="strand" evidence="10">
    <location>
        <begin position="921"/>
        <end position="929"/>
    </location>
</feature>
<feature type="strand" evidence="10">
    <location>
        <begin position="931"/>
        <end position="933"/>
    </location>
</feature>
<feature type="strand" evidence="10">
    <location>
        <begin position="940"/>
        <end position="945"/>
    </location>
</feature>
<feature type="helix" evidence="10">
    <location>
        <begin position="947"/>
        <end position="949"/>
    </location>
</feature>
<feature type="strand" evidence="10">
    <location>
        <begin position="951"/>
        <end position="953"/>
    </location>
</feature>
<feature type="strand" evidence="10">
    <location>
        <begin position="958"/>
        <end position="968"/>
    </location>
</feature>
<feature type="strand" evidence="10">
    <location>
        <begin position="971"/>
        <end position="975"/>
    </location>
</feature>
<feature type="strand" evidence="10">
    <location>
        <begin position="982"/>
        <end position="985"/>
    </location>
</feature>
<feature type="strand" evidence="10">
    <location>
        <begin position="990"/>
        <end position="995"/>
    </location>
</feature>
<feature type="turn" evidence="10">
    <location>
        <begin position="1006"/>
        <end position="1009"/>
    </location>
</feature>
<feature type="strand" evidence="10">
    <location>
        <begin position="1022"/>
        <end position="1025"/>
    </location>
</feature>
<feature type="turn" evidence="10">
    <location>
        <begin position="1036"/>
        <end position="1038"/>
    </location>
</feature>
<feature type="strand" evidence="10">
    <location>
        <begin position="1040"/>
        <end position="1042"/>
    </location>
</feature>
<feature type="turn" evidence="10">
    <location>
        <begin position="1043"/>
        <end position="1046"/>
    </location>
</feature>
<feature type="strand" evidence="10">
    <location>
        <begin position="1047"/>
        <end position="1053"/>
    </location>
</feature>
<feature type="strand" evidence="10">
    <location>
        <begin position="1055"/>
        <end position="1058"/>
    </location>
</feature>
<feature type="strand" evidence="10">
    <location>
        <begin position="1060"/>
        <end position="1064"/>
    </location>
</feature>
<feature type="strand" evidence="10">
    <location>
        <begin position="1073"/>
        <end position="1078"/>
    </location>
</feature>
<feature type="strand" evidence="10">
    <location>
        <begin position="1088"/>
        <end position="1097"/>
    </location>
</feature>
<feature type="strand" evidence="10">
    <location>
        <begin position="1100"/>
        <end position="1107"/>
    </location>
</feature>
<feature type="strand" evidence="10">
    <location>
        <begin position="1113"/>
        <end position="1118"/>
    </location>
</feature>
<feature type="strand" evidence="10">
    <location>
        <begin position="1129"/>
        <end position="1144"/>
    </location>
</feature>
<feature type="strand" evidence="10">
    <location>
        <begin position="1150"/>
        <end position="1159"/>
    </location>
</feature>
<feature type="strand" evidence="10">
    <location>
        <begin position="1171"/>
        <end position="1173"/>
    </location>
</feature>
<feature type="strand" evidence="10">
    <location>
        <begin position="1178"/>
        <end position="1180"/>
    </location>
</feature>
<feature type="turn" evidence="10">
    <location>
        <begin position="1181"/>
        <end position="1184"/>
    </location>
</feature>
<feature type="strand" evidence="10">
    <location>
        <begin position="1185"/>
        <end position="1187"/>
    </location>
</feature>
<feature type="strand" evidence="10">
    <location>
        <begin position="1193"/>
        <end position="1195"/>
    </location>
</feature>
<feature type="helix" evidence="10">
    <location>
        <begin position="1196"/>
        <end position="1198"/>
    </location>
</feature>
<feature type="strand" evidence="10">
    <location>
        <begin position="1221"/>
        <end position="1224"/>
    </location>
</feature>
<feature type="strand" evidence="10">
    <location>
        <begin position="1235"/>
        <end position="1237"/>
    </location>
</feature>
<feature type="strand" evidence="10">
    <location>
        <begin position="1243"/>
        <end position="1246"/>
    </location>
</feature>
<feature type="strand" evidence="10">
    <location>
        <begin position="1248"/>
        <end position="1254"/>
    </location>
</feature>
<feature type="strand" evidence="10">
    <location>
        <begin position="1258"/>
        <end position="1265"/>
    </location>
</feature>
<feature type="helix" evidence="10">
    <location>
        <begin position="1272"/>
        <end position="1275"/>
    </location>
</feature>
<feature type="helix" evidence="10">
    <location>
        <begin position="1277"/>
        <end position="1279"/>
    </location>
</feature>
<feature type="strand" evidence="10">
    <location>
        <begin position="1283"/>
        <end position="1285"/>
    </location>
</feature>
<feature type="strand" evidence="10">
    <location>
        <begin position="1287"/>
        <end position="1289"/>
    </location>
</feature>
<feature type="strand" evidence="10">
    <location>
        <begin position="1292"/>
        <end position="1294"/>
    </location>
</feature>
<feature type="strand" evidence="10">
    <location>
        <begin position="1297"/>
        <end position="1305"/>
    </location>
</feature>
<feature type="turn" evidence="10">
    <location>
        <begin position="1314"/>
        <end position="1316"/>
    </location>
</feature>
<feature type="strand" evidence="10">
    <location>
        <begin position="1319"/>
        <end position="1323"/>
    </location>
</feature>
<feature type="turn" evidence="10">
    <location>
        <begin position="1336"/>
        <end position="1339"/>
    </location>
</feature>
<feature type="strand" evidence="10">
    <location>
        <begin position="1350"/>
        <end position="1355"/>
    </location>
</feature>
<feature type="strand" evidence="10">
    <location>
        <begin position="1361"/>
        <end position="1365"/>
    </location>
</feature>
<feature type="strand" evidence="10">
    <location>
        <begin position="1374"/>
        <end position="1377"/>
    </location>
</feature>
<feature type="helix" evidence="10">
    <location>
        <begin position="1401"/>
        <end position="1403"/>
    </location>
</feature>
<feature type="strand" evidence="10">
    <location>
        <begin position="1411"/>
        <end position="1415"/>
    </location>
</feature>
<feature type="turn" evidence="10">
    <location>
        <begin position="1416"/>
        <end position="1419"/>
    </location>
</feature>
<feature type="strand" evidence="10">
    <location>
        <begin position="1420"/>
        <end position="1424"/>
    </location>
</feature>
<feature type="strand" evidence="10">
    <location>
        <begin position="1429"/>
        <end position="1432"/>
    </location>
</feature>
<feature type="strand" evidence="10">
    <location>
        <begin position="1436"/>
        <end position="1442"/>
    </location>
</feature>
<feature type="turn" evidence="10">
    <location>
        <begin position="1462"/>
        <end position="1464"/>
    </location>
</feature>
<feature type="strand" evidence="10">
    <location>
        <begin position="1469"/>
        <end position="1475"/>
    </location>
</feature>
<feature type="strand" evidence="10">
    <location>
        <begin position="1481"/>
        <end position="1486"/>
    </location>
</feature>
<feature type="strand" evidence="10">
    <location>
        <begin position="1488"/>
        <end position="1490"/>
    </location>
</feature>
<feature type="strand" evidence="10">
    <location>
        <begin position="1492"/>
        <end position="1497"/>
    </location>
</feature>
<feature type="strand" evidence="10">
    <location>
        <begin position="1499"/>
        <end position="1501"/>
    </location>
</feature>
<feature type="strand" evidence="10">
    <location>
        <begin position="1503"/>
        <end position="1507"/>
    </location>
</feature>
<feature type="turn" evidence="10">
    <location>
        <begin position="1515"/>
        <end position="1517"/>
    </location>
</feature>
<feature type="strand" evidence="10">
    <location>
        <begin position="1519"/>
        <end position="1521"/>
    </location>
</feature>
<feature type="helix" evidence="10">
    <location>
        <begin position="1531"/>
        <end position="1533"/>
    </location>
</feature>
<feature type="strand" evidence="10">
    <location>
        <begin position="1539"/>
        <end position="1544"/>
    </location>
</feature>
<feature type="strand" evidence="10">
    <location>
        <begin position="1550"/>
        <end position="1554"/>
    </location>
</feature>
<feature type="turn" evidence="10">
    <location>
        <begin position="1555"/>
        <end position="1558"/>
    </location>
</feature>
<feature type="strand" evidence="10">
    <location>
        <begin position="1559"/>
        <end position="1564"/>
    </location>
</feature>
<feature type="strand" evidence="10">
    <location>
        <begin position="1572"/>
        <end position="1574"/>
    </location>
</feature>
<feature type="strand" evidence="10">
    <location>
        <begin position="1576"/>
        <end position="1580"/>
    </location>
</feature>
<feature type="turn" evidence="10">
    <location>
        <begin position="1581"/>
        <end position="1584"/>
    </location>
</feature>
<feature type="strand" evidence="10">
    <location>
        <begin position="1585"/>
        <end position="1589"/>
    </location>
</feature>
<feature type="strand" evidence="10">
    <location>
        <begin position="1595"/>
        <end position="1600"/>
    </location>
</feature>
<feature type="turn" evidence="10">
    <location>
        <begin position="1601"/>
        <end position="1603"/>
    </location>
</feature>
<feature type="strand" evidence="10">
    <location>
        <begin position="1606"/>
        <end position="1613"/>
    </location>
</feature>
<feature type="turn" evidence="10">
    <location>
        <begin position="1614"/>
        <end position="1616"/>
    </location>
</feature>
<feature type="strand" evidence="10">
    <location>
        <begin position="1617"/>
        <end position="1623"/>
    </location>
</feature>
<feature type="strand" evidence="10">
    <location>
        <begin position="1628"/>
        <end position="1633"/>
    </location>
</feature>
<feature type="strand" evidence="10">
    <location>
        <begin position="1635"/>
        <end position="1637"/>
    </location>
</feature>
<feature type="strand" evidence="10">
    <location>
        <begin position="1639"/>
        <end position="1643"/>
    </location>
</feature>
<feature type="strand" evidence="10">
    <location>
        <begin position="1649"/>
        <end position="1654"/>
    </location>
</feature>
<feature type="helix" evidence="10">
    <location>
        <begin position="1656"/>
        <end position="1658"/>
    </location>
</feature>
<feature type="strand" evidence="10">
    <location>
        <begin position="1660"/>
        <end position="1664"/>
    </location>
</feature>
<feature type="strand" evidence="10">
    <location>
        <begin position="1669"/>
        <end position="1676"/>
    </location>
</feature>
<feature type="turn" evidence="10">
    <location>
        <begin position="1677"/>
        <end position="1680"/>
    </location>
</feature>
<feature type="strand" evidence="10">
    <location>
        <begin position="1681"/>
        <end position="1686"/>
    </location>
</feature>
<feature type="strand" evidence="10">
    <location>
        <begin position="1692"/>
        <end position="1697"/>
    </location>
</feature>
<feature type="strand" evidence="10">
    <location>
        <begin position="1703"/>
        <end position="1707"/>
    </location>
</feature>
<feature type="strand" evidence="10">
    <location>
        <begin position="1713"/>
        <end position="1729"/>
    </location>
</feature>
<feature type="strand" evidence="10">
    <location>
        <begin position="1736"/>
        <end position="1742"/>
    </location>
</feature>
<feature type="strand" evidence="10">
    <location>
        <begin position="1744"/>
        <end position="1753"/>
    </location>
</feature>
<feature type="strand" evidence="10">
    <location>
        <begin position="1756"/>
        <end position="1763"/>
    </location>
</feature>
<feature type="strand" evidence="10">
    <location>
        <begin position="1768"/>
        <end position="1771"/>
    </location>
</feature>
<feature type="strand" evidence="10">
    <location>
        <begin position="1777"/>
        <end position="1780"/>
    </location>
</feature>
<feature type="strand" evidence="10">
    <location>
        <begin position="1782"/>
        <end position="1784"/>
    </location>
</feature>
<feature type="strand" evidence="10">
    <location>
        <begin position="1793"/>
        <end position="1795"/>
    </location>
</feature>
<feature type="strand" evidence="10">
    <location>
        <begin position="1797"/>
        <end position="1801"/>
    </location>
</feature>
<feature type="strand" evidence="10">
    <location>
        <begin position="1803"/>
        <end position="1806"/>
    </location>
</feature>
<feature type="strand" evidence="10">
    <location>
        <begin position="1808"/>
        <end position="1819"/>
    </location>
</feature>
<feature type="strand" evidence="10">
    <location>
        <begin position="1821"/>
        <end position="1833"/>
    </location>
</feature>
<feature type="strand" evidence="10">
    <location>
        <begin position="1836"/>
        <end position="1844"/>
    </location>
</feature>
<feature type="turn" evidence="10">
    <location>
        <begin position="1845"/>
        <end position="1848"/>
    </location>
</feature>
<feature type="strand" evidence="10">
    <location>
        <begin position="1849"/>
        <end position="1854"/>
    </location>
</feature>
<feature type="strand" evidence="10">
    <location>
        <begin position="1860"/>
        <end position="1865"/>
    </location>
</feature>
<feature type="strand" evidence="10">
    <location>
        <begin position="1871"/>
        <end position="1877"/>
    </location>
</feature>
<feature type="strand" evidence="10">
    <location>
        <begin position="1883"/>
        <end position="1887"/>
    </location>
</feature>
<feature type="strand" evidence="10">
    <location>
        <begin position="1893"/>
        <end position="1898"/>
    </location>
</feature>
<feature type="strand" evidence="10">
    <location>
        <begin position="1901"/>
        <end position="1907"/>
    </location>
</feature>
<feature type="strand" evidence="10">
    <location>
        <begin position="1913"/>
        <end position="1918"/>
    </location>
</feature>
<feature type="strand" evidence="10">
    <location>
        <begin position="1923"/>
        <end position="1929"/>
    </location>
</feature>
<feature type="strand" evidence="10">
    <location>
        <begin position="1932"/>
        <end position="1936"/>
    </location>
</feature>
<feature type="strand" evidence="10">
    <location>
        <begin position="1942"/>
        <end position="1947"/>
    </location>
</feature>
<feature type="strand" evidence="10">
    <location>
        <begin position="1953"/>
        <end position="1957"/>
    </location>
</feature>
<feature type="strand" evidence="10">
    <location>
        <begin position="1959"/>
        <end position="1961"/>
    </location>
</feature>
<feature type="strand" evidence="10">
    <location>
        <begin position="1963"/>
        <end position="1970"/>
    </location>
</feature>
<feature type="strand" evidence="10">
    <location>
        <begin position="1972"/>
        <end position="1980"/>
    </location>
</feature>
<feature type="strand" evidence="10">
    <location>
        <begin position="1982"/>
        <end position="1985"/>
    </location>
</feature>
<feature type="strand" evidence="10">
    <location>
        <begin position="1988"/>
        <end position="1992"/>
    </location>
</feature>
<feature type="strand" evidence="10">
    <location>
        <begin position="1998"/>
        <end position="2003"/>
    </location>
</feature>
<feature type="turn" evidence="10">
    <location>
        <begin position="2004"/>
        <end position="2007"/>
    </location>
</feature>
<feature type="strand" evidence="10">
    <location>
        <begin position="2008"/>
        <end position="2014"/>
    </location>
</feature>
<feature type="strand" evidence="10">
    <location>
        <begin position="2020"/>
        <end position="2024"/>
    </location>
</feature>
<feature type="strand" evidence="10">
    <location>
        <begin position="2029"/>
        <end position="2034"/>
    </location>
</feature>
<feature type="turn" evidence="10">
    <location>
        <begin position="2036"/>
        <end position="2038"/>
    </location>
</feature>
<feature type="strand" evidence="10">
    <location>
        <begin position="2041"/>
        <end position="2047"/>
    </location>
</feature>
<feature type="strand" evidence="10">
    <location>
        <begin position="2052"/>
        <end position="2060"/>
    </location>
</feature>
<feature type="strand" evidence="10">
    <location>
        <begin position="2063"/>
        <end position="2071"/>
    </location>
</feature>
<feature type="strand" evidence="10">
    <location>
        <begin position="2079"/>
        <end position="2085"/>
    </location>
</feature>
<feature type="strand" evidence="10">
    <location>
        <begin position="2087"/>
        <end position="2098"/>
    </location>
</feature>
<feature type="strand" evidence="10">
    <location>
        <begin position="2106"/>
        <end position="2110"/>
    </location>
</feature>
<feature type="turn" evidence="10">
    <location>
        <begin position="2112"/>
        <end position="2114"/>
    </location>
</feature>
<feature type="strand" evidence="10">
    <location>
        <begin position="2117"/>
        <end position="2120"/>
    </location>
</feature>
<feature type="strand" evidence="10">
    <location>
        <begin position="2123"/>
        <end position="2127"/>
    </location>
</feature>
<feature type="strand" evidence="10">
    <location>
        <begin position="2132"/>
        <end position="2135"/>
    </location>
</feature>
<feature type="strand" evidence="10">
    <location>
        <begin position="2137"/>
        <end position="2145"/>
    </location>
</feature>
<feature type="strand" evidence="10">
    <location>
        <begin position="2149"/>
        <end position="2158"/>
    </location>
</feature>
<feature type="strand" evidence="10">
    <location>
        <begin position="2161"/>
        <end position="2170"/>
    </location>
</feature>
<feature type="strand" evidence="10">
    <location>
        <begin position="2176"/>
        <end position="2186"/>
    </location>
</feature>
<feature type="strand" evidence="10">
    <location>
        <begin position="2190"/>
        <end position="2196"/>
    </location>
</feature>
<feature type="strand" evidence="10">
    <location>
        <begin position="2202"/>
        <end position="2209"/>
    </location>
</feature>
<feature type="strand" evidence="10">
    <location>
        <begin position="2211"/>
        <end position="2214"/>
    </location>
</feature>
<feature type="strand" evidence="10">
    <location>
        <begin position="2219"/>
        <end position="2221"/>
    </location>
</feature>
<feature type="strand" evidence="10">
    <location>
        <begin position="2223"/>
        <end position="2226"/>
    </location>
</feature>
<feature type="strand" evidence="10">
    <location>
        <begin position="2235"/>
        <end position="2239"/>
    </location>
</feature>
<feature type="strand" evidence="10">
    <location>
        <begin position="2245"/>
        <end position="2248"/>
    </location>
</feature>
<feature type="strand" evidence="10">
    <location>
        <begin position="2251"/>
        <end position="2255"/>
    </location>
</feature>
<feature type="strand" evidence="10">
    <location>
        <begin position="2261"/>
        <end position="2264"/>
    </location>
</feature>
<feature type="strand" evidence="10">
    <location>
        <begin position="2267"/>
        <end position="2271"/>
    </location>
</feature>
<feature type="strand" evidence="10">
    <location>
        <begin position="2277"/>
        <end position="2282"/>
    </location>
</feature>
<feature type="strand" evidence="10">
    <location>
        <begin position="2288"/>
        <end position="2293"/>
    </location>
</feature>
<feature type="strand" evidence="10">
    <location>
        <begin position="2299"/>
        <end position="2307"/>
    </location>
</feature>
<feature type="strand" evidence="10">
    <location>
        <begin position="2310"/>
        <end position="2313"/>
    </location>
</feature>
<feature type="strand" evidence="10">
    <location>
        <begin position="2317"/>
        <end position="2319"/>
    </location>
</feature>
<feature type="strand" evidence="10">
    <location>
        <begin position="2325"/>
        <end position="2328"/>
    </location>
</feature>
<feature type="turn" evidence="10">
    <location>
        <begin position="2329"/>
        <end position="2332"/>
    </location>
</feature>
<feature type="strand" evidence="10">
    <location>
        <begin position="2333"/>
        <end position="2339"/>
    </location>
</feature>
<feature type="strand" evidence="10">
    <location>
        <begin position="2345"/>
        <end position="2350"/>
    </location>
</feature>
<feature type="strand" evidence="10">
    <location>
        <begin position="2355"/>
        <end position="2360"/>
    </location>
</feature>
<feature type="strand" evidence="10">
    <location>
        <begin position="2366"/>
        <end position="2371"/>
    </location>
</feature>
<feature type="strand" evidence="10">
    <location>
        <begin position="2376"/>
        <end position="2382"/>
    </location>
</feature>
<feature type="strand" evidence="10">
    <location>
        <begin position="2388"/>
        <end position="2392"/>
    </location>
</feature>
<feature type="helix" evidence="10">
    <location>
        <begin position="2402"/>
        <end position="2404"/>
    </location>
</feature>
<feature type="strand" evidence="10">
    <location>
        <begin position="2405"/>
        <end position="2408"/>
    </location>
</feature>
<feature type="turn" evidence="10">
    <location>
        <begin position="2409"/>
        <end position="2412"/>
    </location>
</feature>
<feature type="strand" evidence="10">
    <location>
        <begin position="2413"/>
        <end position="2415"/>
    </location>
</feature>
<feature type="strand" evidence="10">
    <location>
        <begin position="2417"/>
        <end position="2422"/>
    </location>
</feature>
<feature type="turn" evidence="10">
    <location>
        <begin position="2423"/>
        <end position="2426"/>
    </location>
</feature>
<feature type="strand" evidence="10">
    <location>
        <begin position="2427"/>
        <end position="2430"/>
    </location>
</feature>
<feature type="helix" evidence="10">
    <location>
        <begin position="2435"/>
        <end position="2437"/>
    </location>
</feature>
<feature type="helix" evidence="10">
    <location>
        <begin position="2453"/>
        <end position="2455"/>
    </location>
</feature>
<feature type="helix" evidence="10">
    <location>
        <begin position="2466"/>
        <end position="2469"/>
    </location>
</feature>
<feature type="helix" evidence="10">
    <location>
        <begin position="2472"/>
        <end position="2478"/>
    </location>
</feature>
<feature type="helix" evidence="10">
    <location>
        <begin position="2482"/>
        <end position="2484"/>
    </location>
</feature>
<feature type="helix" evidence="10">
    <location>
        <begin position="2501"/>
        <end position="2505"/>
    </location>
</feature>
<feature type="helix" evidence="10">
    <location>
        <begin position="2507"/>
        <end position="2510"/>
    </location>
</feature>
<feature type="strand" evidence="10">
    <location>
        <begin position="2511"/>
        <end position="2514"/>
    </location>
</feature>
<feature type="helix" evidence="10">
    <location>
        <begin position="2521"/>
        <end position="2532"/>
    </location>
</feature>
<feature type="helix" evidence="10">
    <location>
        <begin position="2540"/>
        <end position="2542"/>
    </location>
</feature>
<feature type="strand" evidence="10">
    <location>
        <begin position="2570"/>
        <end position="2583"/>
    </location>
</feature>
<feature type="helix" evidence="10">
    <location>
        <begin position="2589"/>
        <end position="2598"/>
    </location>
</feature>
<feature type="strand" evidence="10">
    <location>
        <begin position="2609"/>
        <end position="2611"/>
    </location>
</feature>
<feature type="strand" evidence="10">
    <location>
        <begin position="2614"/>
        <end position="2621"/>
    </location>
</feature>
<feature type="helix" evidence="10">
    <location>
        <begin position="2626"/>
        <end position="2631"/>
    </location>
</feature>
<feature type="strand" evidence="10">
    <location>
        <begin position="2635"/>
        <end position="2640"/>
    </location>
</feature>
<feature type="strand" evidence="10">
    <location>
        <begin position="2646"/>
        <end position="2653"/>
    </location>
</feature>
<feature type="strand" evidence="10">
    <location>
        <begin position="2662"/>
        <end position="2670"/>
    </location>
</feature>
<feature type="strand" evidence="10">
    <location>
        <begin position="2673"/>
        <end position="2680"/>
    </location>
</feature>
<feature type="helix" evidence="10">
    <location>
        <begin position="2683"/>
        <end position="2711"/>
    </location>
</feature>
<feature type="helix" evidence="10">
    <location>
        <begin position="2722"/>
        <end position="2730"/>
    </location>
</feature>
<feature type="strand" evidence="10">
    <location>
        <begin position="2737"/>
        <end position="2743"/>
    </location>
</feature>
<feature type="turn" evidence="10">
    <location>
        <begin position="2745"/>
        <end position="2747"/>
    </location>
</feature>
<feature type="helix" evidence="10">
    <location>
        <begin position="2749"/>
        <end position="2751"/>
    </location>
</feature>
<feature type="helix" evidence="10">
    <location>
        <begin position="2755"/>
        <end position="2757"/>
    </location>
</feature>
<feature type="strand" evidence="10">
    <location>
        <begin position="2758"/>
        <end position="2763"/>
    </location>
</feature>
<sequence length="2769" mass="307957">MDVKERKPYRSLTRRRDAERRYTSSSADSEEGKAPQKSYSSSETLKAYDQDARLAYGSRVKDIVPQEAEEFCRTGANFTLRELGLEEVTPPHGTLYRTDIGLPHCGYSMGAGSDADMEADTVLSPEHPVRLWGRSTRSGRSSCLSSRANSNLTLTDTEHENTETDHPGGLQNHARLRTPPPPLSHAHTPNQHHAASINSLNRGNFTPRSNPSPAPTDHSLSGEPPAGGAQEPAHAQENWLLNSNIPLETRNLGKQPFLGTLQDNLIEMDILGASRHDGAYSDGHFLFKPGGTSPLFCTTSPGYPLTSSTVYSPPPRPLPRSTFARPAFNLKKPSKYCNWKCAALSAIVISATLVILLAYFVAMHLFGLNWHLQPMEGQMYEITEDTASSWPVPTDVSLYPSGGTGLETPDRKGKGTTEGKPSSFFPEDSFIDSGEIDVGRRASQKIPPGTFWRSQVFIDHPVHLKFNVSLGKAALVGIYGRKGLPPSHTQFDFVELLDGRRLLTQEARSLEGTPRQSRGTVPPSSHETGFIQYLDSGIWHLAFYNDGKESEVVSFLTTAIESVDNCPSNCYGNGDCISGTCHCFLGFLGPDCGRASCPVLCSGNGQYMKGRCLCHSGWKGAECDVPTNQCIDVACSNHGTCITGTCICNPGYKGESCEEVDCMDPTCSGRGVCVRGECHCSVGWGGTNCETPRATCLDQCSGHGTFLPDTGLCSCDPSWTGHDCSIEICAADCGGHGVCVGGTCRCEDGWMGAACDQRACHPRCAEHGTCRDGKCECSPGWNGEHCTIAHYLDRVVKEGCPGLCNGNGRCTLDLNGWHCVCQLGWRGAGCDTSMETACGDSKDNDGDGLVDCMDPDCCLQPLCHINPLCLGSPNPLDIIQETQVPVSQQNLHSFYDRIKFLVGRDSTHIIPGENPFDGGHACVIRGQVMTSDGTPLVGVNISFVNNPLFGYTISRQDGSFDLVTNGGISIILRFERAPFITQEHTLWLPWDRFFVMETIIMRHEENEIPSCDLSNFARPNPVVSPSPLTSFASSCAEKGPIVPEIQALQEEISISGCKMRLSYLSSRTPGYKSVLRISLTHPTIPFNLMKVHLMVAVEGRLFRKWFAAAPDLSYYFIWDKTDVYNQKVFGLSEAFVSVGYEYESCPDLILWEKRTTVLQGYEIDASKLGGWSLDKHHALNIQSGILHKGNGENQFVSQQPPVIGSIMGNGRRRSISCPSCNGLADGNKLLAPVALTCGSDGSLYVGDFNYIRRIFPSGNVTNILELRNKDFRHSHSPAHKYYLATDPMSGAVFLSDSNSRRVFKIKSTVVVKDLVKNSEVVAGTGDQCLPFDDTRCGDGGKATEATLTNPRGITVDKFGLIYFVDGTMIRRIDQNGIISTLLGSNDLTSARPLSCDSVMDISQVHLEWPTDLAINPMDNSLYVLDNNVVLQISENHQVRIVAGRPMHCQVPGIDHFLLSKVAIHATLESATALAVSHNGVLYIAETDEKKINRIRQVTTSGEISLVAGAPSGCDCKNDANCDCFSGDDGYAKDAKLNTPSSLAVCADGELYVADLGNIRIRFIRKNKPFLNTQNMYELSSPIDQELYLFDTTGKHLYTQSLPTGDYLYNFTYTGDGDITLITDNNGNMVNVRRDSTGMPLWLVVPDGQVYWVTMGTNSALKSVTTQGHELAMMTYHGNSGLLATKSNENGWTTFYEYDSFGRLTNVTFPTGQVSSFRSDTDSSVHVQVETSSKDDVTITTNLSASGAFYTLLQDQVRNSYYIGADGSLRLLLANGMEVALQTEPHLLAGTVNPTVGKRNVTLPIDNGLNLVEWRQRKEQARGQVTVFGRRLRVHNRNLLSLDFDRVTRTEKIYDDHRKFTLRILYDQAGRPSLWSPSSRLNGVNVTYSPGGYIAGIQRGIMSERMEYDQAGRITSRIFADGKTWSYTYLEKSMVLLLHSQRQYIFEFDKNDRLSSVTMPNVARQTLETIRSVGYYRNIYQPPEGNASVIQDFTEDGHLLHTFYLGTGRRVIYKYGKLSKLAETLYDTTKVSFTYDETAGMLKTINLQNEGFTCTIRYRQIGPLIDRQIFRFTEEGMVNARFDYNYDNSFRVTSMQAVINETPLPIDLYRYDDVSGKTEQFGKFGVIYYDINQIITTAVMTHTKHFDAYGRMKEVQYEIFRSLMYWMTVQYDNMGRVVKKELKVGPYANTTRYSYEYDADGQLQTVSINDKPLWRYSYDLNGNLHLLSPGNSARLTPLRYDIRDRITRLGDVQYKMDEDGFLRQRGGDIFEYNSAGLLIKAYNRAGSWSVRYRYDGLGRRVSSKSSHSHHLQFFYADLTNPTKVTHLYNHSSSEITSLYYDLQGHLFAMELSSGDEFYIACDNIGTPLAVFSGTGLMIKQILYTAYGEIYMDTNPNFQIIIGYHGGLYDPLTKLVHMGRRDYDVLAGRWTSPDHELWKHLSSSNVMPFNLYMFKNNNPISNSQDIKCFMTDVNSWLLTFGFQLHNVIPGYPKPDMDAMEPSYELIHTQMKTQEWDNSKSILGVQCEVQKQLKAFVTLERFDQLYGSTITSCQQAPKTKKFASSGSVFGKGVKFALKDGRVTTDIISVANEDGRRVAAILNHAHYLENLHFTIDGVDTHYFVKPGPSEGDLAILGLSGGRRTLENGVNVTVSQINTVLNGRTRRYTDIQLQYGALCLNTRYGTTLDEEKARVLELARQRAVRQAWAREQQRLREGEEGLRAWTEGEKQQVLSTGRVQGYDGFFVISVEQYPELSDSANNIHFMRQSEMGRR</sequence>
<protein>
    <recommendedName>
        <fullName>Teneurin-4</fullName>
        <shortName>Ten-4</shortName>
    </recommendedName>
    <alternativeName>
        <fullName>Protein Odd Oz/ten-m homolog 4</fullName>
    </alternativeName>
    <alternativeName>
        <fullName>Tenascin-M4</fullName>
        <shortName>Ten-m4</shortName>
    </alternativeName>
    <alternativeName>
        <fullName>Teneurin transmembrane protein 4</fullName>
    </alternativeName>
</protein>
<comment type="function">
    <text evidence="2 7">Involved in neural development, regulating the establishment of proper connectivity within the nervous system. Plays a role in the establishment of the anterior-posterior axis during gastrulation. Regulates the differentiation and cellular process formation of oligodendrocytes and myelination of small-diameter axons in the central nervous system (CNS) (PubMed:26188006). Promotes activation of focal adhesion kinase. May function as a cellular signal transducer (By similarity).</text>
</comment>
<comment type="subunit">
    <text evidence="1 9">Homodimer; disulfide-linked (Probable). May also form heterodimer with either TENM1 or TENM2 or TENM3 (By similarity).</text>
</comment>
<comment type="interaction">
    <interactant intactId="EBI-12827077">
        <id>Q6N022</id>
    </interactant>
    <interactant intactId="EBI-448771">
        <id>Q92608</id>
        <label>DOCK2</label>
    </interactant>
    <organismsDiffer>false</organismsDiffer>
    <experiments>3</experiments>
</comment>
<comment type="interaction">
    <interactant intactId="EBI-12827077">
        <id>Q6N022</id>
    </interactant>
    <interactant intactId="EBI-745290">
        <id>P17482</id>
        <label>HOXB9</label>
    </interactant>
    <organismsDiffer>false</organismsDiffer>
    <experiments>3</experiments>
</comment>
<comment type="interaction">
    <interactant intactId="EBI-12827077">
        <id>Q6N022</id>
    </interactant>
    <interactant intactId="EBI-6658837">
        <id>Q9BYE3</id>
        <label>LCE3D</label>
    </interactant>
    <organismsDiffer>false</organismsDiffer>
    <experiments>3</experiments>
</comment>
<comment type="interaction">
    <interactant intactId="EBI-12827077">
        <id>Q6N022</id>
    </interactant>
    <interactant intactId="EBI-720805">
        <id>P56470</id>
        <label>LGALS4</label>
    </interactant>
    <organismsDiffer>false</organismsDiffer>
    <experiments>3</experiments>
</comment>
<comment type="interaction">
    <interactant intactId="EBI-12827077">
        <id>Q6N022</id>
    </interactant>
    <interactant intactId="EBI-769257">
        <id>Q9NRQ2</id>
        <label>PLSCR4</label>
    </interactant>
    <organismsDiffer>false</organismsDiffer>
    <experiments>3</experiments>
</comment>
<comment type="interaction">
    <interactant intactId="EBI-12827077">
        <id>Q6N022</id>
    </interactant>
    <interactant intactId="EBI-11955083">
        <id>Q9NUL5-4</id>
        <label>SHFL</label>
    </interactant>
    <organismsDiffer>false</organismsDiffer>
    <experiments>3</experiments>
</comment>
<comment type="interaction">
    <interactant intactId="EBI-12827077">
        <id>Q6N022</id>
    </interactant>
    <interactant intactId="EBI-6427977">
        <id>Q96SQ5</id>
        <label>ZNF587</label>
    </interactant>
    <organismsDiffer>false</organismsDiffer>
    <experiments>3</experiments>
</comment>
<comment type="interaction">
    <interactant intactId="EBI-12827077">
        <id>Q6N022</id>
    </interactant>
    <interactant intactId="EBI-11090299">
        <id>Q9H7X3</id>
        <label>ZNF696</label>
    </interactant>
    <organismsDiffer>false</organismsDiffer>
    <experiments>3</experiments>
</comment>
<comment type="subcellular location">
    <subcellularLocation>
        <location evidence="7">Cell membrane</location>
        <topology evidence="3">Single-pass membrane protein</topology>
    </subcellularLocation>
    <subcellularLocation>
        <location evidence="2">Cell projection</location>
    </subcellularLocation>
    <subcellularLocation>
        <location evidence="2">Nucleus</location>
    </subcellularLocation>
    <subcellularLocation>
        <location evidence="2">Cytoplasm</location>
    </subcellularLocation>
</comment>
<comment type="domain">
    <text>EGF-like domains 2 and 5 which have an odd number of cysteines might enable the formation of intermolecular disulfide bonds.</text>
</comment>
<comment type="domain">
    <text>Cytoplasmic proline-rich regions could serve as docking domains for intracellular SH3-containing proteins.</text>
</comment>
<comment type="disease" evidence="7">
    <disease id="DI-04630">
        <name>Tremor, hereditary essential 5</name>
        <acronym>ETM5</acronym>
        <description>A common movement disorder mainly characterized by postural tremor of the arms. Head, legs, trunk, voice, jaw, and facial muscles may also be involved. The condition can be aggravated by emotions, hunger, fatigue and temperature extremes, and may cause a functional disability or even incapacitation. Inheritance is autosomal dominant.</description>
        <dbReference type="MIM" id="616736"/>
    </disease>
    <text>The disease is caused by variants affecting the gene represented in this entry.</text>
</comment>
<comment type="similarity">
    <text evidence="9">Belongs to the tenascin family. Teneurin subfamily.</text>
</comment>
<comment type="sequence caution" evidence="9">
    <conflict type="erroneous initiation">
        <sequence resource="EMBL-CDS" id="BAB71206"/>
    </conflict>
    <text>Truncated N-terminus.</text>
</comment>
<accession>Q6N022</accession>
<accession>A6ND26</accession>
<accession>Q7Z3C7</accession>
<accession>Q96MS6</accession>
<accession>Q9P2P4</accession>
<accession>Q9Y4S2</accession>
<name>TEN4_HUMAN</name>
<gene>
    <name type="primary">TENM4</name>
    <name type="synonym">KIAA1302</name>
    <name type="synonym">ODZ4</name>
    <name type="synonym">TNM4</name>
</gene>
<organism>
    <name type="scientific">Homo sapiens</name>
    <name type="common">Human</name>
    <dbReference type="NCBI Taxonomy" id="9606"/>
    <lineage>
        <taxon>Eukaryota</taxon>
        <taxon>Metazoa</taxon>
        <taxon>Chordata</taxon>
        <taxon>Craniata</taxon>
        <taxon>Vertebrata</taxon>
        <taxon>Euteleostomi</taxon>
        <taxon>Mammalia</taxon>
        <taxon>Eutheria</taxon>
        <taxon>Euarchontoglires</taxon>
        <taxon>Primates</taxon>
        <taxon>Haplorrhini</taxon>
        <taxon>Catarrhini</taxon>
        <taxon>Hominidae</taxon>
        <taxon>Homo</taxon>
    </lineage>
</organism>
<keyword id="KW-0002">3D-structure</keyword>
<keyword id="KW-1003">Cell membrane</keyword>
<keyword id="KW-0966">Cell projection</keyword>
<keyword id="KW-0963">Cytoplasm</keyword>
<keyword id="KW-0217">Developmental protein</keyword>
<keyword id="KW-0221">Differentiation</keyword>
<keyword id="KW-0225">Disease variant</keyword>
<keyword id="KW-1015">Disulfide bond</keyword>
<keyword id="KW-0245">EGF-like domain</keyword>
<keyword id="KW-0325">Glycoprotein</keyword>
<keyword id="KW-0472">Membrane</keyword>
<keyword id="KW-0539">Nucleus</keyword>
<keyword id="KW-0597">Phosphoprotein</keyword>
<keyword id="KW-1267">Proteomics identification</keyword>
<keyword id="KW-1185">Reference proteome</keyword>
<keyword id="KW-0677">Repeat</keyword>
<keyword id="KW-0812">Transmembrane</keyword>
<keyword id="KW-1133">Transmembrane helix</keyword>
<dbReference type="EMBL" id="AP002515">
    <property type="status" value="NOT_ANNOTATED_CDS"/>
    <property type="molecule type" value="Genomic_DNA"/>
</dbReference>
<dbReference type="EMBL" id="AP002768">
    <property type="status" value="NOT_ANNOTATED_CDS"/>
    <property type="molecule type" value="Genomic_DNA"/>
</dbReference>
<dbReference type="EMBL" id="AP002958">
    <property type="status" value="NOT_ANNOTATED_CDS"/>
    <property type="molecule type" value="Genomic_DNA"/>
</dbReference>
<dbReference type="EMBL" id="AP002957">
    <property type="status" value="NOT_ANNOTATED_CDS"/>
    <property type="molecule type" value="Genomic_DNA"/>
</dbReference>
<dbReference type="EMBL" id="AB037723">
    <property type="protein sequence ID" value="BAA92540.3"/>
    <property type="molecule type" value="mRNA"/>
</dbReference>
<dbReference type="EMBL" id="BX640737">
    <property type="protein sequence ID" value="CAE45850.1"/>
    <property type="molecule type" value="mRNA"/>
</dbReference>
<dbReference type="EMBL" id="AL080120">
    <property type="protein sequence ID" value="CAB45719.1"/>
    <property type="molecule type" value="mRNA"/>
</dbReference>
<dbReference type="EMBL" id="BX537983">
    <property type="protein sequence ID" value="CAD97943.1"/>
    <property type="molecule type" value="mRNA"/>
</dbReference>
<dbReference type="EMBL" id="AK056531">
    <property type="protein sequence ID" value="BAB71206.1"/>
    <property type="status" value="ALT_INIT"/>
    <property type="molecule type" value="mRNA"/>
</dbReference>
<dbReference type="CCDS" id="CCDS44688.1"/>
<dbReference type="PIR" id="T12457">
    <property type="entry name" value="T12457"/>
</dbReference>
<dbReference type="RefSeq" id="NP_001092286.2">
    <property type="nucleotide sequence ID" value="NM_001098816.3"/>
</dbReference>
<dbReference type="RefSeq" id="XP_016873015.1">
    <property type="nucleotide sequence ID" value="XM_017017526.1"/>
</dbReference>
<dbReference type="PDB" id="7BAM">
    <property type="method" value="EM"/>
    <property type="resolution" value="3.50 A"/>
    <property type="chains" value="A/B=834-2765"/>
</dbReference>
<dbReference type="PDB" id="7BAN">
    <property type="method" value="EM"/>
    <property type="resolution" value="2.70 A"/>
    <property type="chains" value="A/B=834-2765"/>
</dbReference>
<dbReference type="PDB" id="7BAO">
    <property type="method" value="EM"/>
    <property type="resolution" value="2.70 A"/>
    <property type="chains" value="A=834-2765"/>
</dbReference>
<dbReference type="PDB" id="7PLP">
    <property type="method" value="X-ray"/>
    <property type="resolution" value="1.40 A"/>
    <property type="chains" value="A/B=833-871"/>
</dbReference>
<dbReference type="PDBsum" id="7BAM"/>
<dbReference type="PDBsum" id="7BAN"/>
<dbReference type="PDBsum" id="7BAO"/>
<dbReference type="PDBsum" id="7PLP"/>
<dbReference type="EMDB" id="EMD-12124"/>
<dbReference type="EMDB" id="EMD-12125"/>
<dbReference type="EMDB" id="EMD-12126"/>
<dbReference type="SASBDB" id="Q6N022"/>
<dbReference type="SMR" id="Q6N022"/>
<dbReference type="BioGRID" id="117484">
    <property type="interactions" value="21"/>
</dbReference>
<dbReference type="FunCoup" id="Q6N022">
    <property type="interactions" value="1092"/>
</dbReference>
<dbReference type="IntAct" id="Q6N022">
    <property type="interactions" value="10"/>
</dbReference>
<dbReference type="STRING" id="9606.ENSP00000278550"/>
<dbReference type="CarbonylDB" id="Q6N022"/>
<dbReference type="GlyCosmos" id="Q6N022">
    <property type="glycosylation" value="13 sites, 1 glycan"/>
</dbReference>
<dbReference type="GlyGen" id="Q6N022">
    <property type="glycosylation" value="15 sites, 9 N-linked glycans (5 sites), 2 O-linked glycans (2 sites)"/>
</dbReference>
<dbReference type="iPTMnet" id="Q6N022"/>
<dbReference type="PhosphoSitePlus" id="Q6N022"/>
<dbReference type="SwissPalm" id="Q6N022"/>
<dbReference type="BioMuta" id="TENM4"/>
<dbReference type="DMDM" id="117949795"/>
<dbReference type="jPOST" id="Q6N022"/>
<dbReference type="MassIVE" id="Q6N022"/>
<dbReference type="PaxDb" id="9606-ENSP00000278550"/>
<dbReference type="PeptideAtlas" id="Q6N022"/>
<dbReference type="ProteomicsDB" id="66601"/>
<dbReference type="Antibodypedia" id="67208">
    <property type="antibodies" value="30 antibodies from 9 providers"/>
</dbReference>
<dbReference type="DNASU" id="26011"/>
<dbReference type="Ensembl" id="ENST00000278550.12">
    <property type="protein sequence ID" value="ENSP00000278550.7"/>
    <property type="gene ID" value="ENSG00000149256.16"/>
</dbReference>
<dbReference type="GeneID" id="26011"/>
<dbReference type="KEGG" id="hsa:26011"/>
<dbReference type="MANE-Select" id="ENST00000278550.12">
    <property type="protein sequence ID" value="ENSP00000278550.7"/>
    <property type="RefSeq nucleotide sequence ID" value="NM_001098816.3"/>
    <property type="RefSeq protein sequence ID" value="NP_001092286.2"/>
</dbReference>
<dbReference type="UCSC" id="uc001ozl.5">
    <property type="organism name" value="human"/>
</dbReference>
<dbReference type="AGR" id="HGNC:29945"/>
<dbReference type="CTD" id="26011"/>
<dbReference type="DisGeNET" id="26011"/>
<dbReference type="GeneCards" id="TENM4"/>
<dbReference type="HGNC" id="HGNC:29945">
    <property type="gene designation" value="TENM4"/>
</dbReference>
<dbReference type="HPA" id="ENSG00000149256">
    <property type="expression patterns" value="Tissue enhanced (ovary, parathyroid gland)"/>
</dbReference>
<dbReference type="MalaCards" id="TENM4"/>
<dbReference type="MIM" id="610084">
    <property type="type" value="gene"/>
</dbReference>
<dbReference type="MIM" id="616736">
    <property type="type" value="phenotype"/>
</dbReference>
<dbReference type="neXtProt" id="NX_Q6N022"/>
<dbReference type="OpenTargets" id="ENSG00000149256"/>
<dbReference type="PharmGKB" id="PA134896466"/>
<dbReference type="VEuPathDB" id="HostDB:ENSG00000149256"/>
<dbReference type="eggNOG" id="KOG4659">
    <property type="taxonomic scope" value="Eukaryota"/>
</dbReference>
<dbReference type="GeneTree" id="ENSGT01030000234566"/>
<dbReference type="HOGENOM" id="CLU_000229_0_0_1"/>
<dbReference type="InParanoid" id="Q6N022"/>
<dbReference type="OMA" id="TSHETGF"/>
<dbReference type="OrthoDB" id="442731at2759"/>
<dbReference type="PAN-GO" id="Q6N022">
    <property type="GO annotations" value="6 GO annotations based on evolutionary models"/>
</dbReference>
<dbReference type="PhylomeDB" id="Q6N022"/>
<dbReference type="TreeFam" id="TF316833"/>
<dbReference type="PathwayCommons" id="Q6N022"/>
<dbReference type="SignaLink" id="Q6N022"/>
<dbReference type="BioGRID-ORCS" id="26011">
    <property type="hits" value="15 hits in 1144 CRISPR screens"/>
</dbReference>
<dbReference type="ChiTaRS" id="TENM4">
    <property type="organism name" value="human"/>
</dbReference>
<dbReference type="GeneWiki" id="ODZ4"/>
<dbReference type="GenomeRNAi" id="26011"/>
<dbReference type="Pharos" id="Q6N022">
    <property type="development level" value="Tbio"/>
</dbReference>
<dbReference type="PRO" id="PR:Q6N022"/>
<dbReference type="Proteomes" id="UP000005640">
    <property type="component" value="Chromosome 11"/>
</dbReference>
<dbReference type="RNAct" id="Q6N022">
    <property type="molecule type" value="protein"/>
</dbReference>
<dbReference type="Bgee" id="ENSG00000149256">
    <property type="expression patterns" value="Expressed in hair follicle and 156 other cell types or tissues"/>
</dbReference>
<dbReference type="ExpressionAtlas" id="Q6N022">
    <property type="expression patterns" value="baseline and differential"/>
</dbReference>
<dbReference type="GO" id="GO:0005737">
    <property type="term" value="C:cytoplasm"/>
    <property type="evidence" value="ECO:0000250"/>
    <property type="project" value="UniProtKB"/>
</dbReference>
<dbReference type="GO" id="GO:0098978">
    <property type="term" value="C:glutamatergic synapse"/>
    <property type="evidence" value="ECO:0007669"/>
    <property type="project" value="Ensembl"/>
</dbReference>
<dbReference type="GO" id="GO:0043005">
    <property type="term" value="C:neuron projection"/>
    <property type="evidence" value="ECO:0000250"/>
    <property type="project" value="UniProtKB"/>
</dbReference>
<dbReference type="GO" id="GO:0005634">
    <property type="term" value="C:nucleus"/>
    <property type="evidence" value="ECO:0000250"/>
    <property type="project" value="UniProtKB"/>
</dbReference>
<dbReference type="GO" id="GO:0005886">
    <property type="term" value="C:plasma membrane"/>
    <property type="evidence" value="ECO:0000314"/>
    <property type="project" value="UniProtKB"/>
</dbReference>
<dbReference type="GO" id="GO:0050839">
    <property type="term" value="F:cell adhesion molecule binding"/>
    <property type="evidence" value="ECO:0000318"/>
    <property type="project" value="GO_Central"/>
</dbReference>
<dbReference type="GO" id="GO:0046982">
    <property type="term" value="F:protein heterodimerization activity"/>
    <property type="evidence" value="ECO:0000318"/>
    <property type="project" value="GO_Central"/>
</dbReference>
<dbReference type="GO" id="GO:0042803">
    <property type="term" value="F:protein homodimerization activity"/>
    <property type="evidence" value="ECO:0000250"/>
    <property type="project" value="UniProtKB"/>
</dbReference>
<dbReference type="GO" id="GO:0060912">
    <property type="term" value="P:cardiac cell fate specification"/>
    <property type="evidence" value="ECO:0007669"/>
    <property type="project" value="Ensembl"/>
</dbReference>
<dbReference type="GO" id="GO:0060038">
    <property type="term" value="P:cardiac muscle cell proliferation"/>
    <property type="evidence" value="ECO:0007669"/>
    <property type="project" value="Ensembl"/>
</dbReference>
<dbReference type="GO" id="GO:0032289">
    <property type="term" value="P:central nervous system myelin formation"/>
    <property type="evidence" value="ECO:0000315"/>
    <property type="project" value="UniProtKB"/>
</dbReference>
<dbReference type="GO" id="GO:0001702">
    <property type="term" value="P:gastrulation with mouth forming second"/>
    <property type="evidence" value="ECO:0007669"/>
    <property type="project" value="Ensembl"/>
</dbReference>
<dbReference type="GO" id="GO:0048666">
    <property type="term" value="P:neuron development"/>
    <property type="evidence" value="ECO:0000315"/>
    <property type="project" value="UniProtKB"/>
</dbReference>
<dbReference type="GO" id="GO:2000543">
    <property type="term" value="P:positive regulation of gastrulation"/>
    <property type="evidence" value="ECO:0000250"/>
    <property type="project" value="UniProtKB"/>
</dbReference>
<dbReference type="GO" id="GO:0031643">
    <property type="term" value="P:positive regulation of myelination"/>
    <property type="evidence" value="ECO:0000250"/>
    <property type="project" value="UniProtKB"/>
</dbReference>
<dbReference type="GO" id="GO:0048714">
    <property type="term" value="P:positive regulation of oligodendrocyte differentiation"/>
    <property type="evidence" value="ECO:0000250"/>
    <property type="project" value="UniProtKB"/>
</dbReference>
<dbReference type="GO" id="GO:0031641">
    <property type="term" value="P:regulation of myelination"/>
    <property type="evidence" value="ECO:0000315"/>
    <property type="project" value="UniProtKB"/>
</dbReference>
<dbReference type="GO" id="GO:0007165">
    <property type="term" value="P:signal transduction"/>
    <property type="evidence" value="ECO:0007669"/>
    <property type="project" value="InterPro"/>
</dbReference>
<dbReference type="GO" id="GO:0099560">
    <property type="term" value="P:synaptic membrane adhesion"/>
    <property type="evidence" value="ECO:0007669"/>
    <property type="project" value="Ensembl"/>
</dbReference>
<dbReference type="CDD" id="cd00054">
    <property type="entry name" value="EGF_CA"/>
    <property type="match status" value="1"/>
</dbReference>
<dbReference type="FunFam" id="2.10.25.10:FF:000016">
    <property type="entry name" value="Teneurin transmembrane protein 2"/>
    <property type="match status" value="1"/>
</dbReference>
<dbReference type="FunFam" id="2.10.25.10:FF:000021">
    <property type="entry name" value="Teneurin transmembrane protein 2"/>
    <property type="match status" value="2"/>
</dbReference>
<dbReference type="FunFam" id="2.10.25.10:FF:000026">
    <property type="entry name" value="Teneurin transmembrane protein 2"/>
    <property type="match status" value="1"/>
</dbReference>
<dbReference type="FunFam" id="2.10.25.10:FF:000013">
    <property type="entry name" value="Teneurin transmembrane protein 4"/>
    <property type="match status" value="1"/>
</dbReference>
<dbReference type="FunFam" id="2.10.25.10:FF:000132">
    <property type="entry name" value="Teneurin transmembrane protein 4"/>
    <property type="match status" value="1"/>
</dbReference>
<dbReference type="FunFam" id="2.120.10.30:FF:000005">
    <property type="entry name" value="Teneurin transmembrane protein 4"/>
    <property type="match status" value="1"/>
</dbReference>
<dbReference type="FunFam" id="2.120.10.30:FF:000006">
    <property type="entry name" value="Teneurin transmembrane protein 4"/>
    <property type="match status" value="1"/>
</dbReference>
<dbReference type="FunFam" id="2.180.10.10:FF:000001">
    <property type="entry name" value="Teneurin transmembrane protein 4"/>
    <property type="match status" value="1"/>
</dbReference>
<dbReference type="FunFam" id="2.180.10.10:FF:000005">
    <property type="entry name" value="Teneurin transmembrane protein 4"/>
    <property type="match status" value="1"/>
</dbReference>
<dbReference type="Gene3D" id="2.10.25.10">
    <property type="entry name" value="Laminin"/>
    <property type="match status" value="7"/>
</dbReference>
<dbReference type="Gene3D" id="2.180.10.10">
    <property type="entry name" value="RHS repeat-associated core"/>
    <property type="match status" value="2"/>
</dbReference>
<dbReference type="Gene3D" id="2.120.10.30">
    <property type="entry name" value="TolB, C-terminal domain"/>
    <property type="match status" value="2"/>
</dbReference>
<dbReference type="InterPro" id="IPR011042">
    <property type="entry name" value="6-blade_b-propeller_TolB-like"/>
</dbReference>
<dbReference type="InterPro" id="IPR008969">
    <property type="entry name" value="CarboxyPept-like_regulatory"/>
</dbReference>
<dbReference type="InterPro" id="IPR000742">
    <property type="entry name" value="EGF-like_dom"/>
</dbReference>
<dbReference type="InterPro" id="IPR022385">
    <property type="entry name" value="Rhs_assc_core"/>
</dbReference>
<dbReference type="InterPro" id="IPR009471">
    <property type="entry name" value="Ten_N"/>
</dbReference>
<dbReference type="InterPro" id="IPR056822">
    <property type="entry name" value="TEN_NHL"/>
</dbReference>
<dbReference type="InterPro" id="IPR056820">
    <property type="entry name" value="TEN_TTR-like"/>
</dbReference>
<dbReference type="InterPro" id="IPR056823">
    <property type="entry name" value="TEN_YD-shell"/>
</dbReference>
<dbReference type="InterPro" id="IPR051216">
    <property type="entry name" value="Teneurin"/>
</dbReference>
<dbReference type="InterPro" id="IPR028916">
    <property type="entry name" value="Tox-GHH_dom"/>
</dbReference>
<dbReference type="InterPro" id="IPR006530">
    <property type="entry name" value="YD"/>
</dbReference>
<dbReference type="NCBIfam" id="TIGR03696">
    <property type="entry name" value="Rhs_assc_core"/>
    <property type="match status" value="1"/>
</dbReference>
<dbReference type="NCBIfam" id="TIGR01643">
    <property type="entry name" value="YD_repeat_2x"/>
    <property type="match status" value="2"/>
</dbReference>
<dbReference type="PANTHER" id="PTHR11219">
    <property type="entry name" value="TENEURIN AND N-ACETYLGLUCOSAMINE-1-PHOSPHODIESTER ALPHA-N-ACETYLGLUCOSAMINIDASE"/>
    <property type="match status" value="1"/>
</dbReference>
<dbReference type="PANTHER" id="PTHR11219:SF9">
    <property type="entry name" value="TENEURIN-4"/>
    <property type="match status" value="1"/>
</dbReference>
<dbReference type="Pfam" id="PF25024">
    <property type="entry name" value="EGF_TEN"/>
    <property type="match status" value="1"/>
</dbReference>
<dbReference type="Pfam" id="PF24329">
    <property type="entry name" value="FN-plug_TEN1-4"/>
    <property type="match status" value="1"/>
</dbReference>
<dbReference type="Pfam" id="PF23093">
    <property type="entry name" value="GBD_Tenm3"/>
    <property type="match status" value="1"/>
</dbReference>
<dbReference type="Pfam" id="PF06484">
    <property type="entry name" value="Ten_N"/>
    <property type="match status" value="2"/>
</dbReference>
<dbReference type="Pfam" id="PF25021">
    <property type="entry name" value="TEN_NHL"/>
    <property type="match status" value="1"/>
</dbReference>
<dbReference type="Pfam" id="PF25023">
    <property type="entry name" value="TEN_YD-shell"/>
    <property type="match status" value="1"/>
</dbReference>
<dbReference type="Pfam" id="PF23538">
    <property type="entry name" value="Teneurin_ABD"/>
    <property type="match status" value="1"/>
</dbReference>
<dbReference type="Pfam" id="PF15636">
    <property type="entry name" value="Tox-GHH"/>
    <property type="match status" value="1"/>
</dbReference>
<dbReference type="Pfam" id="PF25020">
    <property type="entry name" value="TTR_TEN1-4"/>
    <property type="match status" value="1"/>
</dbReference>
<dbReference type="SMART" id="SM00181">
    <property type="entry name" value="EGF"/>
    <property type="match status" value="8"/>
</dbReference>
<dbReference type="SUPFAM" id="SSF63829">
    <property type="entry name" value="Calcium-dependent phosphotriesterase"/>
    <property type="match status" value="1"/>
</dbReference>
<dbReference type="SUPFAM" id="SSF49464">
    <property type="entry name" value="Carboxypeptidase regulatory domain-like"/>
    <property type="match status" value="1"/>
</dbReference>
<dbReference type="SUPFAM" id="SSF57196">
    <property type="entry name" value="EGF/Laminin"/>
    <property type="match status" value="1"/>
</dbReference>
<dbReference type="SUPFAM" id="SSF101898">
    <property type="entry name" value="NHL repeat"/>
    <property type="match status" value="1"/>
</dbReference>
<dbReference type="PROSITE" id="PS00022">
    <property type="entry name" value="EGF_1"/>
    <property type="match status" value="8"/>
</dbReference>
<dbReference type="PROSITE" id="PS01186">
    <property type="entry name" value="EGF_2"/>
    <property type="match status" value="7"/>
</dbReference>
<dbReference type="PROSITE" id="PS50026">
    <property type="entry name" value="EGF_3"/>
    <property type="match status" value="5"/>
</dbReference>
<dbReference type="PROSITE" id="PS51361">
    <property type="entry name" value="TENEURIN_N"/>
    <property type="match status" value="1"/>
</dbReference>
<reference key="1">
    <citation type="journal article" date="2006" name="Nature">
        <title>Human chromosome 11 DNA sequence and analysis including novel gene identification.</title>
        <authorList>
            <person name="Taylor T.D."/>
            <person name="Noguchi H."/>
            <person name="Totoki Y."/>
            <person name="Toyoda A."/>
            <person name="Kuroki Y."/>
            <person name="Dewar K."/>
            <person name="Lloyd C."/>
            <person name="Itoh T."/>
            <person name="Takeda T."/>
            <person name="Kim D.-W."/>
            <person name="She X."/>
            <person name="Barlow K.F."/>
            <person name="Bloom T."/>
            <person name="Bruford E."/>
            <person name="Chang J.L."/>
            <person name="Cuomo C.A."/>
            <person name="Eichler E."/>
            <person name="FitzGerald M.G."/>
            <person name="Jaffe D.B."/>
            <person name="LaButti K."/>
            <person name="Nicol R."/>
            <person name="Park H.-S."/>
            <person name="Seaman C."/>
            <person name="Sougnez C."/>
            <person name="Yang X."/>
            <person name="Zimmer A.R."/>
            <person name="Zody M.C."/>
            <person name="Birren B.W."/>
            <person name="Nusbaum C."/>
            <person name="Fujiyama A."/>
            <person name="Hattori M."/>
            <person name="Rogers J."/>
            <person name="Lander E.S."/>
            <person name="Sakaki Y."/>
        </authorList>
    </citation>
    <scope>NUCLEOTIDE SEQUENCE [LARGE SCALE GENOMIC DNA]</scope>
</reference>
<reference key="2">
    <citation type="journal article" date="2000" name="DNA Res.">
        <title>Prediction of the coding sequences of unidentified human genes. XVI. The complete sequences of 150 new cDNA clones from brain which code for large proteins in vitro.</title>
        <authorList>
            <person name="Nagase T."/>
            <person name="Kikuno R."/>
            <person name="Ishikawa K."/>
            <person name="Hirosawa M."/>
            <person name="Ohara O."/>
        </authorList>
    </citation>
    <scope>NUCLEOTIDE SEQUENCE [LARGE SCALE MRNA] OF 754-2769</scope>
    <source>
        <tissue>Brain</tissue>
    </source>
</reference>
<reference key="3">
    <citation type="journal article" date="2002" name="DNA Res.">
        <title>Construction of expression-ready cDNA clones for KIAA genes: manual curation of 330 KIAA cDNA clones.</title>
        <authorList>
            <person name="Nakajima D."/>
            <person name="Okazaki N."/>
            <person name="Yamakawa H."/>
            <person name="Kikuno R."/>
            <person name="Ohara O."/>
            <person name="Nagase T."/>
        </authorList>
    </citation>
    <scope>SEQUENCE REVISION</scope>
</reference>
<reference key="4">
    <citation type="journal article" date="2007" name="BMC Genomics">
        <title>The full-ORF clone resource of the German cDNA consortium.</title>
        <authorList>
            <person name="Bechtel S."/>
            <person name="Rosenfelder H."/>
            <person name="Duda A."/>
            <person name="Schmidt C.P."/>
            <person name="Ernst U."/>
            <person name="Wellenreuther R."/>
            <person name="Mehrle A."/>
            <person name="Schuster C."/>
            <person name="Bahr A."/>
            <person name="Bloecker H."/>
            <person name="Heubner D."/>
            <person name="Hoerlein A."/>
            <person name="Michel G."/>
            <person name="Wedler H."/>
            <person name="Koehrer K."/>
            <person name="Ottenwaelder B."/>
            <person name="Poustka A."/>
            <person name="Wiemann S."/>
            <person name="Schupp I."/>
        </authorList>
    </citation>
    <scope>NUCLEOTIDE SEQUENCE [LARGE SCALE MRNA] OF 1371-2769</scope>
    <source>
        <tissue>Brain</tissue>
        <tissue>Cervix</tissue>
        <tissue>Fetal kidney</tissue>
    </source>
</reference>
<reference key="5">
    <citation type="journal article" date="2004" name="Nat. Genet.">
        <title>Complete sequencing and characterization of 21,243 full-length human cDNAs.</title>
        <authorList>
            <person name="Ota T."/>
            <person name="Suzuki Y."/>
            <person name="Nishikawa T."/>
            <person name="Otsuki T."/>
            <person name="Sugiyama T."/>
            <person name="Irie R."/>
            <person name="Wakamatsu A."/>
            <person name="Hayashi K."/>
            <person name="Sato H."/>
            <person name="Nagai K."/>
            <person name="Kimura K."/>
            <person name="Makita H."/>
            <person name="Sekine M."/>
            <person name="Obayashi M."/>
            <person name="Nishi T."/>
            <person name="Shibahara T."/>
            <person name="Tanaka T."/>
            <person name="Ishii S."/>
            <person name="Yamamoto J."/>
            <person name="Saito K."/>
            <person name="Kawai Y."/>
            <person name="Isono Y."/>
            <person name="Nakamura Y."/>
            <person name="Nagahari K."/>
            <person name="Murakami K."/>
            <person name="Yasuda T."/>
            <person name="Iwayanagi T."/>
            <person name="Wagatsuma M."/>
            <person name="Shiratori A."/>
            <person name="Sudo H."/>
            <person name="Hosoiri T."/>
            <person name="Kaku Y."/>
            <person name="Kodaira H."/>
            <person name="Kondo H."/>
            <person name="Sugawara M."/>
            <person name="Takahashi M."/>
            <person name="Kanda K."/>
            <person name="Yokoi T."/>
            <person name="Furuya T."/>
            <person name="Kikkawa E."/>
            <person name="Omura Y."/>
            <person name="Abe K."/>
            <person name="Kamihara K."/>
            <person name="Katsuta N."/>
            <person name="Sato K."/>
            <person name="Tanikawa M."/>
            <person name="Yamazaki M."/>
            <person name="Ninomiya K."/>
            <person name="Ishibashi T."/>
            <person name="Yamashita H."/>
            <person name="Murakawa K."/>
            <person name="Fujimori K."/>
            <person name="Tanai H."/>
            <person name="Kimata M."/>
            <person name="Watanabe M."/>
            <person name="Hiraoka S."/>
            <person name="Chiba Y."/>
            <person name="Ishida S."/>
            <person name="Ono Y."/>
            <person name="Takiguchi S."/>
            <person name="Watanabe S."/>
            <person name="Yosida M."/>
            <person name="Hotuta T."/>
            <person name="Kusano J."/>
            <person name="Kanehori K."/>
            <person name="Takahashi-Fujii A."/>
            <person name="Hara H."/>
            <person name="Tanase T.-O."/>
            <person name="Nomura Y."/>
            <person name="Togiya S."/>
            <person name="Komai F."/>
            <person name="Hara R."/>
            <person name="Takeuchi K."/>
            <person name="Arita M."/>
            <person name="Imose N."/>
            <person name="Musashino K."/>
            <person name="Yuuki H."/>
            <person name="Oshima A."/>
            <person name="Sasaki N."/>
            <person name="Aotsuka S."/>
            <person name="Yoshikawa Y."/>
            <person name="Matsunawa H."/>
            <person name="Ichihara T."/>
            <person name="Shiohata N."/>
            <person name="Sano S."/>
            <person name="Moriya S."/>
            <person name="Momiyama H."/>
            <person name="Satoh N."/>
            <person name="Takami S."/>
            <person name="Terashima Y."/>
            <person name="Suzuki O."/>
            <person name="Nakagawa S."/>
            <person name="Senoh A."/>
            <person name="Mizoguchi H."/>
            <person name="Goto Y."/>
            <person name="Shimizu F."/>
            <person name="Wakebe H."/>
            <person name="Hishigaki H."/>
            <person name="Watanabe T."/>
            <person name="Sugiyama A."/>
            <person name="Takemoto M."/>
            <person name="Kawakami B."/>
            <person name="Yamazaki M."/>
            <person name="Watanabe K."/>
            <person name="Kumagai A."/>
            <person name="Itakura S."/>
            <person name="Fukuzumi Y."/>
            <person name="Fujimori Y."/>
            <person name="Komiyama M."/>
            <person name="Tashiro H."/>
            <person name="Tanigami A."/>
            <person name="Fujiwara T."/>
            <person name="Ono T."/>
            <person name="Yamada K."/>
            <person name="Fujii Y."/>
            <person name="Ozaki K."/>
            <person name="Hirao M."/>
            <person name="Ohmori Y."/>
            <person name="Kawabata A."/>
            <person name="Hikiji T."/>
            <person name="Kobatake N."/>
            <person name="Inagaki H."/>
            <person name="Ikema Y."/>
            <person name="Okamoto S."/>
            <person name="Okitani R."/>
            <person name="Kawakami T."/>
            <person name="Noguchi S."/>
            <person name="Itoh T."/>
            <person name="Shigeta K."/>
            <person name="Senba T."/>
            <person name="Matsumura K."/>
            <person name="Nakajima Y."/>
            <person name="Mizuno T."/>
            <person name="Morinaga M."/>
            <person name="Sasaki M."/>
            <person name="Togashi T."/>
            <person name="Oyama M."/>
            <person name="Hata H."/>
            <person name="Watanabe M."/>
            <person name="Komatsu T."/>
            <person name="Mizushima-Sugano J."/>
            <person name="Satoh T."/>
            <person name="Shirai Y."/>
            <person name="Takahashi Y."/>
            <person name="Nakagawa K."/>
            <person name="Okumura K."/>
            <person name="Nagase T."/>
            <person name="Nomura N."/>
            <person name="Kikuchi H."/>
            <person name="Masuho Y."/>
            <person name="Yamashita R."/>
            <person name="Nakai K."/>
            <person name="Yada T."/>
            <person name="Nakamura Y."/>
            <person name="Ohara O."/>
            <person name="Isogai T."/>
            <person name="Sugano S."/>
        </authorList>
    </citation>
    <scope>NUCLEOTIDE SEQUENCE [LARGE SCALE MRNA] OF 2040-2715</scope>
</reference>
<reference key="6">
    <citation type="journal article" date="2009" name="Sci. Signal.">
        <title>Quantitative phosphoproteomic analysis of T cell receptor signaling reveals system-wide modulation of protein-protein interactions.</title>
        <authorList>
            <person name="Mayya V."/>
            <person name="Lundgren D.H."/>
            <person name="Hwang S.-I."/>
            <person name="Rezaul K."/>
            <person name="Wu L."/>
            <person name="Eng J.K."/>
            <person name="Rodionov V."/>
            <person name="Han D.K."/>
        </authorList>
    </citation>
    <scope>IDENTIFICATION BY MASS SPECTROMETRY [LARGE SCALE ANALYSIS]</scope>
    <source>
        <tissue>Leukemic T-cell</tissue>
    </source>
</reference>
<reference key="7">
    <citation type="journal article" date="2015" name="Hum. Mol. Genet.">
        <title>Missense mutations in TENM4, a regulator of axon guidance and central myelination, cause essential tremor.</title>
        <authorList>
            <person name="Hor H."/>
            <person name="Francescatto L."/>
            <person name="Bartesaghi L."/>
            <person name="Ortega-Cubero S."/>
            <person name="Kousi M."/>
            <person name="Lorenzo-Betancor O."/>
            <person name="Jimenez-Jimenez F.J."/>
            <person name="Gironell A."/>
            <person name="Clarimon J."/>
            <person name="Drechsel O."/>
            <person name="Agundez J.A."/>
            <person name="Kenzelmann Broz D."/>
            <person name="Chiquet-Ehrismann R."/>
            <person name="Lleo A."/>
            <person name="Coria F."/>
            <person name="Garcia-Martin E."/>
            <person name="Alonso-Navarro H."/>
            <person name="Marti M.J."/>
            <person name="Kulisevsky J."/>
            <person name="Hor C.N."/>
            <person name="Ossowski S."/>
            <person name="Chrast R."/>
            <person name="Katsanis N."/>
            <person name="Pastor P."/>
            <person name="Estivill X."/>
        </authorList>
    </citation>
    <scope>FUNCTION</scope>
    <scope>SUBCELLULAR LOCATION</scope>
    <scope>INVOLVEMENT IN ETM5</scope>
    <scope>VARIANTS ETM5 PRO-53; ASP-474; GLN-518; MET-1128; MET-1138; ASN-1367; THR-1442; GLN-1535; HIS-1632; ARG-1763 AND ILE-2451</scope>
    <scope>CHARACTERIZATION OF VARIANTS ETM5 MET-1138; ASN-1367 AND THR-1442</scope>
</reference>
<reference key="8">
    <citation type="journal article" date="2019" name="Eur. J. Hum. Genet.">
        <title>Homozygous stop-gain variant in LRRC32, encoding a TGFbeta receptor, associated with cleft palate, proliferative retinopathy, and developmental delay.</title>
        <authorList>
            <person name="Harel T."/>
            <person name="Levy-Lahad E."/>
            <person name="Daana M."/>
            <person name="Mechoulam H."/>
            <person name="Horowitz-Cederboim S."/>
            <person name="Gur M."/>
            <person name="Meiner V."/>
            <person name="Elpeleg O."/>
        </authorList>
    </citation>
    <scope>VARIANT GLU-519</scope>
</reference>
<evidence type="ECO:0000250" key="1"/>
<evidence type="ECO:0000250" key="2">
    <source>
        <dbReference type="UniProtKB" id="Q3UHK6"/>
    </source>
</evidence>
<evidence type="ECO:0000255" key="3"/>
<evidence type="ECO:0000255" key="4">
    <source>
        <dbReference type="PROSITE-ProRule" id="PRU00076"/>
    </source>
</evidence>
<evidence type="ECO:0000255" key="5">
    <source>
        <dbReference type="PROSITE-ProRule" id="PRU00694"/>
    </source>
</evidence>
<evidence type="ECO:0000256" key="6">
    <source>
        <dbReference type="SAM" id="MobiDB-lite"/>
    </source>
</evidence>
<evidence type="ECO:0000269" key="7">
    <source>
    </source>
</evidence>
<evidence type="ECO:0000269" key="8">
    <source>
    </source>
</evidence>
<evidence type="ECO:0000305" key="9"/>
<evidence type="ECO:0007829" key="10">
    <source>
        <dbReference type="PDB" id="7BAN"/>
    </source>
</evidence>
<evidence type="ECO:0007829" key="11">
    <source>
        <dbReference type="PDB" id="7PLP"/>
    </source>
</evidence>